<protein>
    <recommendedName>
        <fullName evidence="2">Putative protein-lysine deacylase ABHD14B</fullName>
        <ecNumber evidence="1">2.3.1.-</ecNumber>
    </recommendedName>
    <alternativeName>
        <fullName evidence="2">Alpha/beta hydrolase domain-containing protein 14B</fullName>
        <shortName evidence="1">Abhydrolase domain-containing protein 14B</shortName>
    </alternativeName>
</protein>
<sequence>MAASVEQREDTIQVQGQALFFREARPGSGQAHFSVLLLHGIRFSSETWQNLGTLHQLAQAGYRAVAIDLPGLGRSKEAAAPAPIGELAPGSFLAAVVDALELGPPVVISPSLSGMYSLPFLTAPGSQLLGYVPVAPICTDKINAANYASVKTPALIVYGDQDPMGQTSFEHLKQLPNHRVLIMKGAGHPCYLDKPEEWHTGLLDFLQGLQ</sequence>
<proteinExistence type="evidence at transcript level"/>
<accession>Q5R816</accession>
<dbReference type="EC" id="2.3.1.-" evidence="1"/>
<dbReference type="EMBL" id="CR859939">
    <property type="protein sequence ID" value="CAH92094.1"/>
    <property type="molecule type" value="mRNA"/>
</dbReference>
<dbReference type="SMR" id="Q5R816"/>
<dbReference type="FunCoup" id="Q5R816">
    <property type="interactions" value="1404"/>
</dbReference>
<dbReference type="STRING" id="9601.ENSPPYP00000015468"/>
<dbReference type="ESTHER" id="ponab-abheb">
    <property type="family name" value="CIB-CCG1-interacting-factor-B"/>
</dbReference>
<dbReference type="eggNOG" id="ENOG502QR0B">
    <property type="taxonomic scope" value="Eukaryota"/>
</dbReference>
<dbReference type="InParanoid" id="Q5R816"/>
<dbReference type="Proteomes" id="UP000001595">
    <property type="component" value="Unplaced"/>
</dbReference>
<dbReference type="GO" id="GO:0005737">
    <property type="term" value="C:cytoplasm"/>
    <property type="evidence" value="ECO:0007669"/>
    <property type="project" value="UniProtKB-SubCell"/>
</dbReference>
<dbReference type="GO" id="GO:0005634">
    <property type="term" value="C:nucleus"/>
    <property type="evidence" value="ECO:0007669"/>
    <property type="project" value="UniProtKB-SubCell"/>
</dbReference>
<dbReference type="GO" id="GO:0016787">
    <property type="term" value="F:hydrolase activity"/>
    <property type="evidence" value="ECO:0007669"/>
    <property type="project" value="TreeGrafter"/>
</dbReference>
<dbReference type="GO" id="GO:0061733">
    <property type="term" value="F:protein-lysine-acetyltransferase activity"/>
    <property type="evidence" value="ECO:0007669"/>
    <property type="project" value="RHEA"/>
</dbReference>
<dbReference type="GO" id="GO:0045944">
    <property type="term" value="P:positive regulation of transcription by RNA polymerase II"/>
    <property type="evidence" value="ECO:0007669"/>
    <property type="project" value="TreeGrafter"/>
</dbReference>
<dbReference type="FunFam" id="3.40.50.1820:FF:000077">
    <property type="entry name" value="Abhydrolase domain containing 14B"/>
    <property type="match status" value="1"/>
</dbReference>
<dbReference type="Gene3D" id="3.40.50.1820">
    <property type="entry name" value="alpha/beta hydrolase"/>
    <property type="match status" value="1"/>
</dbReference>
<dbReference type="InterPro" id="IPR000073">
    <property type="entry name" value="AB_hydrolase_1"/>
</dbReference>
<dbReference type="InterPro" id="IPR029058">
    <property type="entry name" value="AB_hydrolase_fold"/>
</dbReference>
<dbReference type="PANTHER" id="PTHR46197">
    <property type="entry name" value="PROTEIN ABHD14B-LIKE"/>
    <property type="match status" value="1"/>
</dbReference>
<dbReference type="PANTHER" id="PTHR46197:SF2">
    <property type="entry name" value="PROTEIN-LYSINE DEACYLASE ABHD14B-RELATED"/>
    <property type="match status" value="1"/>
</dbReference>
<dbReference type="Pfam" id="PF12697">
    <property type="entry name" value="Abhydrolase_6"/>
    <property type="match status" value="1"/>
</dbReference>
<dbReference type="SUPFAM" id="SSF53474">
    <property type="entry name" value="alpha/beta-Hydrolases"/>
    <property type="match status" value="1"/>
</dbReference>
<name>ABHEB_PONAB</name>
<feature type="initiator methionine" description="Removed" evidence="1">
    <location>
        <position position="1"/>
    </location>
</feature>
<feature type="chain" id="PRO_0000065040" description="Putative protein-lysine deacylase ABHD14B">
    <location>
        <begin position="2"/>
        <end position="210"/>
    </location>
</feature>
<feature type="active site" description="Charge relay system" evidence="1">
    <location>
        <position position="111"/>
    </location>
</feature>
<feature type="active site" description="Charge relay system" evidence="1">
    <location>
        <position position="162"/>
    </location>
</feature>
<feature type="active site" description="Charge relay system" evidence="1">
    <location>
        <position position="188"/>
    </location>
</feature>
<feature type="modified residue" description="N-acetylalanine" evidence="1">
    <location>
        <position position="2"/>
    </location>
</feature>
<feature type="modified residue" description="Phosphoserine" evidence="1">
    <location>
        <position position="91"/>
    </location>
</feature>
<gene>
    <name evidence="1" type="primary">ABHD14B</name>
</gene>
<organism>
    <name type="scientific">Pongo abelii</name>
    <name type="common">Sumatran orangutan</name>
    <name type="synonym">Pongo pygmaeus abelii</name>
    <dbReference type="NCBI Taxonomy" id="9601"/>
    <lineage>
        <taxon>Eukaryota</taxon>
        <taxon>Metazoa</taxon>
        <taxon>Chordata</taxon>
        <taxon>Craniata</taxon>
        <taxon>Vertebrata</taxon>
        <taxon>Euteleostomi</taxon>
        <taxon>Mammalia</taxon>
        <taxon>Eutheria</taxon>
        <taxon>Euarchontoglires</taxon>
        <taxon>Primates</taxon>
        <taxon>Haplorrhini</taxon>
        <taxon>Catarrhini</taxon>
        <taxon>Hominidae</taxon>
        <taxon>Pongo</taxon>
    </lineage>
</organism>
<keyword id="KW-0007">Acetylation</keyword>
<keyword id="KW-0012">Acyltransferase</keyword>
<keyword id="KW-0963">Cytoplasm</keyword>
<keyword id="KW-0539">Nucleus</keyword>
<keyword id="KW-0597">Phosphoprotein</keyword>
<keyword id="KW-1185">Reference proteome</keyword>
<keyword id="KW-0808">Transferase</keyword>
<comment type="function">
    <text evidence="1">Acts as an atypical protein-lysine deacetylase in vitro. Catalyzes the deacetylation of lysine residues using CoA as substrate, generating acetyl-CoA and the free amine of protein-lysine residues. Additional experiments are however required to confirm the protein-lysine deacetylase activity in vivo. Has hydrolase activity towards various surrogate p-nitrophenyl (pNp) substrates, such as pNp-butyrate, pNp-acetate and pNp-octanoate in vitro, with a strong preference for pNp-acetate. May activate transcription.</text>
</comment>
<comment type="catalytic activity">
    <reaction evidence="1">
        <text>L-lysyl-[protein] + acetyl-CoA = N(6)-acetyl-L-lysyl-[protein] + CoA + H(+)</text>
        <dbReference type="Rhea" id="RHEA:45948"/>
        <dbReference type="Rhea" id="RHEA-COMP:9752"/>
        <dbReference type="Rhea" id="RHEA-COMP:10731"/>
        <dbReference type="ChEBI" id="CHEBI:15378"/>
        <dbReference type="ChEBI" id="CHEBI:29969"/>
        <dbReference type="ChEBI" id="CHEBI:57287"/>
        <dbReference type="ChEBI" id="CHEBI:57288"/>
        <dbReference type="ChEBI" id="CHEBI:61930"/>
    </reaction>
    <physiologicalReaction direction="right-to-left" evidence="1">
        <dbReference type="Rhea" id="RHEA:45950"/>
    </physiologicalReaction>
</comment>
<comment type="subunit">
    <text evidence="1">May interact with TAF1.</text>
</comment>
<comment type="subcellular location">
    <subcellularLocation>
        <location evidence="1">Cytoplasm</location>
    </subcellularLocation>
    <subcellularLocation>
        <location evidence="1">Nucleus</location>
    </subcellularLocation>
    <text evidence="1">Predominantly cytoplasmic.</text>
</comment>
<comment type="similarity">
    <text evidence="2">Belongs to the AB hydrolase superfamily. ABHD14 family.</text>
</comment>
<comment type="caution">
    <text evidence="1">The protein-lysine deacetylase activity using CoA as substrate is unclear as this protein belongs to a family of serine hydrolases, and that the reaction shown in the publication is not hydrolyzing H(2)O (By similarity). Additional experiments are therefore required to confirm this activity in vivo (By similarity).</text>
</comment>
<evidence type="ECO:0000250" key="1">
    <source>
        <dbReference type="UniProtKB" id="Q96IU4"/>
    </source>
</evidence>
<evidence type="ECO:0000305" key="2"/>
<reference key="1">
    <citation type="submission" date="2004-11" db="EMBL/GenBank/DDBJ databases">
        <authorList>
            <consortium name="The German cDNA consortium"/>
        </authorList>
    </citation>
    <scope>NUCLEOTIDE SEQUENCE [LARGE SCALE MRNA]</scope>
    <source>
        <tissue>Kidney</tissue>
    </source>
</reference>